<reference key="1">
    <citation type="submission" date="2002-12" db="EMBL/GenBank/DDBJ databases">
        <title>Complete genome sequence of Vibrio vulnificus CMCP6.</title>
        <authorList>
            <person name="Rhee J.H."/>
            <person name="Kim S.Y."/>
            <person name="Chung S.S."/>
            <person name="Kim J.J."/>
            <person name="Moon Y.H."/>
            <person name="Jeong H."/>
            <person name="Choy H.E."/>
        </authorList>
    </citation>
    <scope>NUCLEOTIDE SEQUENCE [LARGE SCALE GENOMIC DNA]</scope>
    <source>
        <strain>CMCP6</strain>
    </source>
</reference>
<evidence type="ECO:0000255" key="1">
    <source>
        <dbReference type="HAMAP-Rule" id="MF_00300"/>
    </source>
</evidence>
<organism>
    <name type="scientific">Vibrio vulnificus (strain CMCP6)</name>
    <dbReference type="NCBI Taxonomy" id="216895"/>
    <lineage>
        <taxon>Bacteria</taxon>
        <taxon>Pseudomonadati</taxon>
        <taxon>Pseudomonadota</taxon>
        <taxon>Gammaproteobacteria</taxon>
        <taxon>Vibrionales</taxon>
        <taxon>Vibrionaceae</taxon>
        <taxon>Vibrio</taxon>
    </lineage>
</organism>
<keyword id="KW-0028">Amino-acid biosynthesis</keyword>
<keyword id="KW-0057">Aromatic amino acid biosynthesis</keyword>
<keyword id="KW-0274">FAD</keyword>
<keyword id="KW-0285">Flavoprotein</keyword>
<keyword id="KW-0288">FMN</keyword>
<keyword id="KW-0456">Lyase</keyword>
<keyword id="KW-0521">NADP</keyword>
<dbReference type="EC" id="4.2.3.5" evidence="1"/>
<dbReference type="EMBL" id="AE016795">
    <property type="protein sequence ID" value="AAO10381.1"/>
    <property type="molecule type" value="Genomic_DNA"/>
</dbReference>
<dbReference type="RefSeq" id="WP_011079880.1">
    <property type="nucleotide sequence ID" value="NC_004459.3"/>
</dbReference>
<dbReference type="SMR" id="Q8DB42"/>
<dbReference type="GeneID" id="93896203"/>
<dbReference type="KEGG" id="vvu:VV1_1981"/>
<dbReference type="HOGENOM" id="CLU_034547_0_2_6"/>
<dbReference type="UniPathway" id="UPA00053">
    <property type="reaction ID" value="UER00090"/>
</dbReference>
<dbReference type="Proteomes" id="UP000002275">
    <property type="component" value="Chromosome 1"/>
</dbReference>
<dbReference type="GO" id="GO:0005829">
    <property type="term" value="C:cytosol"/>
    <property type="evidence" value="ECO:0007669"/>
    <property type="project" value="TreeGrafter"/>
</dbReference>
<dbReference type="GO" id="GO:0004107">
    <property type="term" value="F:chorismate synthase activity"/>
    <property type="evidence" value="ECO:0007669"/>
    <property type="project" value="UniProtKB-UniRule"/>
</dbReference>
<dbReference type="GO" id="GO:0010181">
    <property type="term" value="F:FMN binding"/>
    <property type="evidence" value="ECO:0007669"/>
    <property type="project" value="TreeGrafter"/>
</dbReference>
<dbReference type="GO" id="GO:0008652">
    <property type="term" value="P:amino acid biosynthetic process"/>
    <property type="evidence" value="ECO:0007669"/>
    <property type="project" value="UniProtKB-KW"/>
</dbReference>
<dbReference type="GO" id="GO:0009073">
    <property type="term" value="P:aromatic amino acid family biosynthetic process"/>
    <property type="evidence" value="ECO:0007669"/>
    <property type="project" value="UniProtKB-KW"/>
</dbReference>
<dbReference type="GO" id="GO:0009423">
    <property type="term" value="P:chorismate biosynthetic process"/>
    <property type="evidence" value="ECO:0007669"/>
    <property type="project" value="UniProtKB-UniRule"/>
</dbReference>
<dbReference type="CDD" id="cd07304">
    <property type="entry name" value="Chorismate_synthase"/>
    <property type="match status" value="1"/>
</dbReference>
<dbReference type="FunFam" id="3.60.150.10:FF:000001">
    <property type="entry name" value="Chorismate synthase"/>
    <property type="match status" value="1"/>
</dbReference>
<dbReference type="Gene3D" id="3.60.150.10">
    <property type="entry name" value="Chorismate synthase AroC"/>
    <property type="match status" value="1"/>
</dbReference>
<dbReference type="HAMAP" id="MF_00300">
    <property type="entry name" value="Chorismate_synth"/>
    <property type="match status" value="1"/>
</dbReference>
<dbReference type="InterPro" id="IPR000453">
    <property type="entry name" value="Chorismate_synth"/>
</dbReference>
<dbReference type="InterPro" id="IPR035904">
    <property type="entry name" value="Chorismate_synth_AroC_sf"/>
</dbReference>
<dbReference type="InterPro" id="IPR020541">
    <property type="entry name" value="Chorismate_synthase_CS"/>
</dbReference>
<dbReference type="NCBIfam" id="TIGR00033">
    <property type="entry name" value="aroC"/>
    <property type="match status" value="1"/>
</dbReference>
<dbReference type="NCBIfam" id="NF003793">
    <property type="entry name" value="PRK05382.1"/>
    <property type="match status" value="1"/>
</dbReference>
<dbReference type="PANTHER" id="PTHR21085">
    <property type="entry name" value="CHORISMATE SYNTHASE"/>
    <property type="match status" value="1"/>
</dbReference>
<dbReference type="PANTHER" id="PTHR21085:SF0">
    <property type="entry name" value="CHORISMATE SYNTHASE"/>
    <property type="match status" value="1"/>
</dbReference>
<dbReference type="Pfam" id="PF01264">
    <property type="entry name" value="Chorismate_synt"/>
    <property type="match status" value="1"/>
</dbReference>
<dbReference type="PIRSF" id="PIRSF001456">
    <property type="entry name" value="Chorismate_synth"/>
    <property type="match status" value="1"/>
</dbReference>
<dbReference type="SUPFAM" id="SSF103263">
    <property type="entry name" value="Chorismate synthase, AroC"/>
    <property type="match status" value="1"/>
</dbReference>
<dbReference type="PROSITE" id="PS00787">
    <property type="entry name" value="CHORISMATE_SYNTHASE_1"/>
    <property type="match status" value="1"/>
</dbReference>
<dbReference type="PROSITE" id="PS00788">
    <property type="entry name" value="CHORISMATE_SYNTHASE_2"/>
    <property type="match status" value="1"/>
</dbReference>
<dbReference type="PROSITE" id="PS00789">
    <property type="entry name" value="CHORISMATE_SYNTHASE_3"/>
    <property type="match status" value="1"/>
</dbReference>
<name>AROC_VIBVU</name>
<accession>Q8DB42</accession>
<protein>
    <recommendedName>
        <fullName evidence="1">Chorismate synthase</fullName>
        <shortName evidence="1">CS</shortName>
        <ecNumber evidence="1">4.2.3.5</ecNumber>
    </recommendedName>
    <alternativeName>
        <fullName evidence="1">5-enolpyruvylshikimate-3-phosphate phospholyase</fullName>
    </alternativeName>
</protein>
<comment type="function">
    <text evidence="1">Catalyzes the anti-1,4-elimination of the C-3 phosphate and the C-6 proR hydrogen from 5-enolpyruvylshikimate-3-phosphate (EPSP) to yield chorismate, which is the branch point compound that serves as the starting substrate for the three terminal pathways of aromatic amino acid biosynthesis. This reaction introduces a second double bond into the aromatic ring system.</text>
</comment>
<comment type="catalytic activity">
    <reaction evidence="1">
        <text>5-O-(1-carboxyvinyl)-3-phosphoshikimate = chorismate + phosphate</text>
        <dbReference type="Rhea" id="RHEA:21020"/>
        <dbReference type="ChEBI" id="CHEBI:29748"/>
        <dbReference type="ChEBI" id="CHEBI:43474"/>
        <dbReference type="ChEBI" id="CHEBI:57701"/>
        <dbReference type="EC" id="4.2.3.5"/>
    </reaction>
</comment>
<comment type="cofactor">
    <cofactor evidence="1">
        <name>FMNH2</name>
        <dbReference type="ChEBI" id="CHEBI:57618"/>
    </cofactor>
    <text evidence="1">Reduced FMN (FMNH(2)).</text>
</comment>
<comment type="pathway">
    <text evidence="1">Metabolic intermediate biosynthesis; chorismate biosynthesis; chorismate from D-erythrose 4-phosphate and phosphoenolpyruvate: step 7/7.</text>
</comment>
<comment type="subunit">
    <text evidence="1">Homotetramer.</text>
</comment>
<comment type="similarity">
    <text evidence="1">Belongs to the chorismate synthase family.</text>
</comment>
<sequence length="361" mass="38964">MAGNSIGQHFRVTTFGESHGIALGCIVDGCPPGLEISEADLQTDLDRRRPGTSRYTTQRREPDEVKILSGVFEGKTTGTSIGLLIENTDQRSKDYSDIKDKFRPGHADYTYHQKYGIRDYRGGGRSSARETAMRVAAGAIAKKYLKQAFGVEIRAYLSQMGDVAIDKVDWNEIENNPFFCPDVDKVEAFDQLIRDLKKEGDSIGAKIQVVATNVPVGLGEPVFDRLDADIAHALMSINAVKGVEIGDGFDVVSQKGSQHRDTLSPQGFGSNHAGGILGGISTGQDIVANIALKPTSSITVPGDTINVDGESTQLITKGRHDPCVGIRAVPIAEAMLAIVVMDHLLRHRGQNHGVSTQTPKI</sequence>
<proteinExistence type="inferred from homology"/>
<feature type="chain" id="PRO_0000140675" description="Chorismate synthase">
    <location>
        <begin position="1"/>
        <end position="361"/>
    </location>
</feature>
<feature type="binding site" evidence="1">
    <location>
        <position position="48"/>
    </location>
    <ligand>
        <name>NADP(+)</name>
        <dbReference type="ChEBI" id="CHEBI:58349"/>
    </ligand>
</feature>
<feature type="binding site" evidence="1">
    <location>
        <position position="54"/>
    </location>
    <ligand>
        <name>NADP(+)</name>
        <dbReference type="ChEBI" id="CHEBI:58349"/>
    </ligand>
</feature>
<feature type="binding site" evidence="1">
    <location>
        <begin position="125"/>
        <end position="127"/>
    </location>
    <ligand>
        <name>FMN</name>
        <dbReference type="ChEBI" id="CHEBI:58210"/>
    </ligand>
</feature>
<feature type="binding site" evidence="1">
    <location>
        <begin position="238"/>
        <end position="239"/>
    </location>
    <ligand>
        <name>FMN</name>
        <dbReference type="ChEBI" id="CHEBI:58210"/>
    </ligand>
</feature>
<feature type="binding site" evidence="1">
    <location>
        <position position="278"/>
    </location>
    <ligand>
        <name>FMN</name>
        <dbReference type="ChEBI" id="CHEBI:58210"/>
    </ligand>
</feature>
<feature type="binding site" evidence="1">
    <location>
        <begin position="293"/>
        <end position="297"/>
    </location>
    <ligand>
        <name>FMN</name>
        <dbReference type="ChEBI" id="CHEBI:58210"/>
    </ligand>
</feature>
<feature type="binding site" evidence="1">
    <location>
        <position position="319"/>
    </location>
    <ligand>
        <name>FMN</name>
        <dbReference type="ChEBI" id="CHEBI:58210"/>
    </ligand>
</feature>
<gene>
    <name evidence="1" type="primary">aroC</name>
    <name type="ordered locus">VV1_1981</name>
</gene>